<comment type="function">
    <text evidence="1">One of the primary rRNA binding proteins, it binds directly to 16S rRNA where it helps nucleate assembly of the platform of the 30S subunit by binding and bridging several RNA helices of the 16S rRNA.</text>
</comment>
<comment type="function">
    <text evidence="1">Forms an intersubunit bridge (bridge B4) with the 23S rRNA of the 50S subunit in the ribosome.</text>
</comment>
<comment type="subunit">
    <text evidence="1">Part of the 30S ribosomal subunit. Forms a bridge to the 50S subunit in the 70S ribosome, contacting the 23S rRNA.</text>
</comment>
<comment type="similarity">
    <text evidence="1">Belongs to the universal ribosomal protein uS15 family.</text>
</comment>
<keyword id="KW-0687">Ribonucleoprotein</keyword>
<keyword id="KW-0689">Ribosomal protein</keyword>
<keyword id="KW-0694">RNA-binding</keyword>
<keyword id="KW-0699">rRNA-binding</keyword>
<name>RS15_BURCM</name>
<protein>
    <recommendedName>
        <fullName evidence="1">Small ribosomal subunit protein uS15</fullName>
    </recommendedName>
    <alternativeName>
        <fullName evidence="2">30S ribosomal protein S15</fullName>
    </alternativeName>
</protein>
<reference key="1">
    <citation type="submission" date="2006-08" db="EMBL/GenBank/DDBJ databases">
        <title>Complete sequence of chromosome 1 of Burkholderia cepacia AMMD.</title>
        <authorList>
            <person name="Copeland A."/>
            <person name="Lucas S."/>
            <person name="Lapidus A."/>
            <person name="Barry K."/>
            <person name="Detter J.C."/>
            <person name="Glavina del Rio T."/>
            <person name="Hammon N."/>
            <person name="Israni S."/>
            <person name="Pitluck S."/>
            <person name="Bruce D."/>
            <person name="Chain P."/>
            <person name="Malfatti S."/>
            <person name="Shin M."/>
            <person name="Vergez L."/>
            <person name="Schmutz J."/>
            <person name="Larimer F."/>
            <person name="Land M."/>
            <person name="Hauser L."/>
            <person name="Kyrpides N."/>
            <person name="Kim E."/>
            <person name="Parke J."/>
            <person name="Coenye T."/>
            <person name="Konstantinidis K."/>
            <person name="Ramette A."/>
            <person name="Tiedje J."/>
            <person name="Richardson P."/>
        </authorList>
    </citation>
    <scope>NUCLEOTIDE SEQUENCE [LARGE SCALE GENOMIC DNA]</scope>
    <source>
        <strain>ATCC BAA-244 / DSM 16087 / CCUG 44356 / LMG 19182 / AMMD</strain>
    </source>
</reference>
<accession>Q0BDC5</accession>
<dbReference type="EMBL" id="CP000440">
    <property type="protein sequence ID" value="ABI87848.1"/>
    <property type="molecule type" value="Genomic_DNA"/>
</dbReference>
<dbReference type="RefSeq" id="WP_006398792.1">
    <property type="nucleotide sequence ID" value="NZ_CP009798.1"/>
</dbReference>
<dbReference type="SMR" id="Q0BDC5"/>
<dbReference type="GeneID" id="98107299"/>
<dbReference type="KEGG" id="bam:Bamb_2292"/>
<dbReference type="PATRIC" id="fig|339670.21.peg.2635"/>
<dbReference type="eggNOG" id="COG0184">
    <property type="taxonomic scope" value="Bacteria"/>
</dbReference>
<dbReference type="Proteomes" id="UP000000662">
    <property type="component" value="Chromosome 1"/>
</dbReference>
<dbReference type="GO" id="GO:0022627">
    <property type="term" value="C:cytosolic small ribosomal subunit"/>
    <property type="evidence" value="ECO:0007669"/>
    <property type="project" value="TreeGrafter"/>
</dbReference>
<dbReference type="GO" id="GO:0019843">
    <property type="term" value="F:rRNA binding"/>
    <property type="evidence" value="ECO:0007669"/>
    <property type="project" value="UniProtKB-UniRule"/>
</dbReference>
<dbReference type="GO" id="GO:0003735">
    <property type="term" value="F:structural constituent of ribosome"/>
    <property type="evidence" value="ECO:0007669"/>
    <property type="project" value="InterPro"/>
</dbReference>
<dbReference type="GO" id="GO:0006412">
    <property type="term" value="P:translation"/>
    <property type="evidence" value="ECO:0007669"/>
    <property type="project" value="UniProtKB-UniRule"/>
</dbReference>
<dbReference type="CDD" id="cd00353">
    <property type="entry name" value="Ribosomal_S15p_S13e"/>
    <property type="match status" value="1"/>
</dbReference>
<dbReference type="FunFam" id="1.10.287.10:FF:000002">
    <property type="entry name" value="30S ribosomal protein S15"/>
    <property type="match status" value="1"/>
</dbReference>
<dbReference type="Gene3D" id="6.10.250.3130">
    <property type="match status" value="1"/>
</dbReference>
<dbReference type="Gene3D" id="1.10.287.10">
    <property type="entry name" value="S15/NS1, RNA-binding"/>
    <property type="match status" value="1"/>
</dbReference>
<dbReference type="HAMAP" id="MF_01343_B">
    <property type="entry name" value="Ribosomal_uS15_B"/>
    <property type="match status" value="1"/>
</dbReference>
<dbReference type="InterPro" id="IPR000589">
    <property type="entry name" value="Ribosomal_uS15"/>
</dbReference>
<dbReference type="InterPro" id="IPR005290">
    <property type="entry name" value="Ribosomal_uS15_bac-type"/>
</dbReference>
<dbReference type="InterPro" id="IPR009068">
    <property type="entry name" value="uS15_NS1_RNA-bd_sf"/>
</dbReference>
<dbReference type="NCBIfam" id="TIGR00952">
    <property type="entry name" value="S15_bact"/>
    <property type="match status" value="1"/>
</dbReference>
<dbReference type="PANTHER" id="PTHR23321">
    <property type="entry name" value="RIBOSOMAL PROTEIN S15, BACTERIAL AND ORGANELLAR"/>
    <property type="match status" value="1"/>
</dbReference>
<dbReference type="PANTHER" id="PTHR23321:SF26">
    <property type="entry name" value="SMALL RIBOSOMAL SUBUNIT PROTEIN US15M"/>
    <property type="match status" value="1"/>
</dbReference>
<dbReference type="Pfam" id="PF00312">
    <property type="entry name" value="Ribosomal_S15"/>
    <property type="match status" value="1"/>
</dbReference>
<dbReference type="SMART" id="SM01387">
    <property type="entry name" value="Ribosomal_S15"/>
    <property type="match status" value="1"/>
</dbReference>
<dbReference type="SUPFAM" id="SSF47060">
    <property type="entry name" value="S15/NS1 RNA-binding domain"/>
    <property type="match status" value="1"/>
</dbReference>
<dbReference type="PROSITE" id="PS00362">
    <property type="entry name" value="RIBOSOMAL_S15"/>
    <property type="match status" value="1"/>
</dbReference>
<gene>
    <name evidence="1" type="primary">rpsO</name>
    <name type="ordered locus">Bamb_2292</name>
</gene>
<sequence>MSVADIKKSEVVAQFARGTNDTGSPEVQVALLTARIVELTGHFKTHAKDHHSRRGLLRMVSRRRKLLDYLKGKDADRYRALIEKLGLRK</sequence>
<organism>
    <name type="scientific">Burkholderia ambifaria (strain ATCC BAA-244 / DSM 16087 / CCUG 44356 / LMG 19182 / AMMD)</name>
    <name type="common">Burkholderia cepacia (strain AMMD)</name>
    <dbReference type="NCBI Taxonomy" id="339670"/>
    <lineage>
        <taxon>Bacteria</taxon>
        <taxon>Pseudomonadati</taxon>
        <taxon>Pseudomonadota</taxon>
        <taxon>Betaproteobacteria</taxon>
        <taxon>Burkholderiales</taxon>
        <taxon>Burkholderiaceae</taxon>
        <taxon>Burkholderia</taxon>
        <taxon>Burkholderia cepacia complex</taxon>
    </lineage>
</organism>
<proteinExistence type="inferred from homology"/>
<feature type="chain" id="PRO_1000054759" description="Small ribosomal subunit protein uS15">
    <location>
        <begin position="1"/>
        <end position="89"/>
    </location>
</feature>
<evidence type="ECO:0000255" key="1">
    <source>
        <dbReference type="HAMAP-Rule" id="MF_01343"/>
    </source>
</evidence>
<evidence type="ECO:0000305" key="2"/>